<name>TAB1_MOUSE</name>
<feature type="chain" id="PRO_0000057798" description="TGF-beta-activated kinase 1 and MAP3K7-binding protein 1">
    <location>
        <begin position="1"/>
        <end position="502"/>
    </location>
</feature>
<feature type="domain" description="PPM-type phosphatase" evidence="2">
    <location>
        <begin position="28"/>
        <end position="365"/>
    </location>
</feature>
<feature type="region of interest" description="Disordered" evidence="3">
    <location>
        <begin position="1"/>
        <end position="21"/>
    </location>
</feature>
<feature type="region of interest" description="Disordered" evidence="3">
    <location>
        <begin position="414"/>
        <end position="476"/>
    </location>
</feature>
<feature type="compositionally biased region" description="Polar residues" evidence="3">
    <location>
        <begin position="7"/>
        <end position="17"/>
    </location>
</feature>
<feature type="compositionally biased region" description="Polar residues" evidence="3">
    <location>
        <begin position="414"/>
        <end position="437"/>
    </location>
</feature>
<feature type="compositionally biased region" description="Low complexity" evidence="3">
    <location>
        <begin position="438"/>
        <end position="455"/>
    </location>
</feature>
<feature type="site" description="Required for interaction with MAP3K7" evidence="1">
    <location>
        <position position="482"/>
    </location>
</feature>
<feature type="modified residue" description="Phosphoserine" evidence="12">
    <location>
        <position position="7"/>
    </location>
</feature>
<feature type="modified residue" description="Phosphoserine" evidence="1">
    <location>
        <position position="421"/>
    </location>
</feature>
<feature type="modified residue" description="Phosphothreonine" evidence="1">
    <location>
        <position position="429"/>
    </location>
</feature>
<feature type="modified residue" description="Phosphoserine" evidence="1">
    <location>
        <position position="436"/>
    </location>
</feature>
<feature type="modified residue" description="Phosphothreonine" evidence="1">
    <location>
        <position position="440"/>
    </location>
</feature>
<feature type="glycosylation site" description="O-linked (GlcNAc) serine" evidence="1">
    <location>
        <position position="393"/>
    </location>
</feature>
<feature type="sequence conflict" description="In Ref. 1; BAC43729." evidence="8" ref="1">
    <original>Q</original>
    <variation>H</variation>
    <location>
        <position position="199"/>
    </location>
</feature>
<feature type="sequence conflict" description="In Ref. 1; BAC43729." evidence="8" ref="1">
    <original>ENE</original>
    <variation>DND</variation>
    <location>
        <begin position="210"/>
        <end position="212"/>
    </location>
</feature>
<feature type="sequence conflict" description="In Ref. 1; BAC43729." evidence="8" ref="1">
    <original>L</original>
    <variation>P</variation>
    <location>
        <position position="323"/>
    </location>
</feature>
<gene>
    <name type="primary">Tab1</name>
    <name type="synonym">Map3k7ip1</name>
</gene>
<sequence length="502" mass="54616">MAAQRRSLLQSEQQPSWTDDLPLCHLSGVGSASNRSYSADGKGTESHPPEDNWLKFRSENNCFLYGVFNGYDGNRVTNFVAQRLSAELLLGQLNTEHTEADVRRVLLQAFDVVERSFLESIDDALAEKASLQSQLPEGVPQHQLPPQYQKILERLKALEREISGGAMAVVAVLLNSKLYVANVGTNRALLCKSTVDGLQVTQLNMDHTTENEDELFRLSQLGLDAGKIKQMGVICGQESTRRIGDYKVKYGYTDIDLLSAAKSKPIIAEPEIHGAQPLDGVTGFLVLMSEGLYKALEAAHGPGQANQEIAAMIDTEFAKQTSLDAVAQAVVDRVKRIHSDTFASGGERAKFCPRHEDMTLLVRNFGYPLGEMSQPTPTPAPGGRVYPVSVPYSSAQSTSKTSVTLSLVMPSQGQMVNGSHSASTLDEATPTLTNQSPTLTLQSTNTHTQSSSSSSDGGLFRSRPAHSLPPGEDGRVEPYVDFAEFYRLWSVDHGEQSVMTAP</sequence>
<comment type="function">
    <text evidence="1 4 5 6 7">Key adapter protein that plays an essential role in JNK and NF-kappa-B activation and proinflammatory cytokines production in response to stimulation with TLRs and cytokines (PubMed:12464436, PubMed:28073917). Mechanistically, associates with the catalytic domain of MAP3K7/TAK1 to trigger MAP3K7/TAK1 autophosphorylation leading to its full activation (PubMed:37832545). Similarly, associates with MAPK14 and triggers its autophosphorylation and subsequent activation (PubMed:24037507). In turn, MAPK14 phosphorylates TAB1 and inhibits MAP3K7/TAK1 activation in a feedback control mechanism. Also plays a role in recruiting MAPK14 to the TAK1 complex for the phosphorylation of the TAB2 and TAB3 regulatory subunits (By similarity).</text>
</comment>
<comment type="subunit">
    <text evidence="1 7">Interacts with XIAP and BIRC7 (By similarity). Interacts with TRAF6 and MAP3K7; during IL-1 signaling (By similarity). Identified in the TRIKA2 complex composed of MAP3K7, TAB1 and TAB2 (By similarity). Interacts with TRAF6 and MAPK14; these interactions allow MAPK14 autophosphorylation (By similarity). Interacts with STING1; interaction takes place following cGAMP activation and promotes TAB1 recruitment to the endoplasmic reticulum, triggering MAP3K7/TAK1 activation and STING1 phosphorylation (PubMed:37832545).</text>
</comment>
<comment type="interaction">
    <interactant intactId="EBI-1778503">
        <id>Q8CF89</id>
    </interactant>
    <interactant intactId="EBI-447913">
        <id>P53349</id>
        <label>Map3k1</label>
    </interactant>
    <organismsDiffer>false</organismsDiffer>
    <experiments>4</experiments>
</comment>
<comment type="interaction">
    <interactant intactId="EBI-1778503">
        <id>Q8CF89</id>
    </interactant>
    <interactant intactId="EBI-1775345">
        <id>Q62073</id>
        <label>Map3k7</label>
    </interactant>
    <organismsDiffer>false</organismsDiffer>
    <experiments>2</experiments>
</comment>
<comment type="interaction">
    <interactant intactId="EBI-1778503">
        <id>Q8CF89</id>
    </interactant>
    <interactant intactId="EBI-1207633">
        <id>Q86Y07-1</id>
        <label>VRK2</label>
    </interactant>
    <organismsDiffer>true</organismsDiffer>
    <experiments>2</experiments>
</comment>
<comment type="subcellular location">
    <subcellularLocation>
        <location evidence="7">Cytoplasm</location>
        <location evidence="7">Cytosol</location>
    </subcellularLocation>
    <subcellularLocation>
        <location evidence="7">Endoplasmic reticulum membrane</location>
        <topology evidence="7">Peripheral membrane protein</topology>
        <orientation evidence="7">Cytoplasmic side</orientation>
    </subcellularLocation>
    <text evidence="7">Recruited to the endoplasmic reticulum following interaction with STING1.</text>
</comment>
<comment type="PTM">
    <text evidence="1">Phosphorylated at all three sites Ser-421, Thr-429 and Ser-436 by MAPK14 when cells were exposed to cellular stresses, or stimulated with TNF-alpha, IL1 or LPS. These phosphorylations inhibit TAK1 activation by a feedback control mechanism. Dephosphorylated by DUSP14 at Ser-436, leading to TAB1-MAP3K7/TAK1 complex inactivation in T-cells.</text>
</comment>
<comment type="PTM">
    <text evidence="1 6">Ubiquitinated by MAP3K1 with 'Lys-63'-linked polyubiquitin; leading to activation of TAK1 and of JNK and p38 MAP kinases following EGF and TGF-beta stimulation. Ubiquitinated by ITCH with 'Lys-48'-linked polyubiquitin; leading to proteasomal degradation (By similarity). Ubiquitinated by RNF114 during maternal-to-zygotic transition; leading to degradation (PubMed:28073917).</text>
</comment>
<comment type="PTM">
    <text evidence="1">O-GlcNAcylated at Ser-393 is required for full MAP3K7/TAK1 activation upon stimulation with IL-1 or osmotic stress.</text>
</comment>
<comment type="disruption phenotype">
    <text evidence="4">Mutant mice die in the late stages of gestation, exhibiting edema and severe embryonic hemorrhage.</text>
</comment>
<comment type="caution">
    <text evidence="1">Lacks several key residues involved in metal-binding and catalytic activity, therefore has lost phosphatase activity.</text>
</comment>
<dbReference type="EMBL" id="AB088136">
    <property type="protein sequence ID" value="BAC43729.1"/>
    <property type="molecule type" value="mRNA"/>
</dbReference>
<dbReference type="EMBL" id="BC027054">
    <property type="protein sequence ID" value="AAH27054.1"/>
    <property type="molecule type" value="mRNA"/>
</dbReference>
<dbReference type="EMBL" id="BC041110">
    <property type="protein sequence ID" value="AAH41110.1"/>
    <property type="molecule type" value="mRNA"/>
</dbReference>
<dbReference type="EMBL" id="BC054369">
    <property type="protein sequence ID" value="AAH54369.1"/>
    <property type="molecule type" value="mRNA"/>
</dbReference>
<dbReference type="CCDS" id="CCDS27659.1"/>
<dbReference type="RefSeq" id="NP_079885.2">
    <property type="nucleotide sequence ID" value="NM_025609.2"/>
</dbReference>
<dbReference type="PDB" id="4LOO">
    <property type="method" value="X-ray"/>
    <property type="resolution" value="1.95 A"/>
    <property type="chains" value="B=384-412"/>
</dbReference>
<dbReference type="PDB" id="4LOP">
    <property type="method" value="X-ray"/>
    <property type="resolution" value="2.05 A"/>
    <property type="chains" value="K/L/M/N=384-412"/>
</dbReference>
<dbReference type="PDB" id="4LOQ">
    <property type="method" value="X-ray"/>
    <property type="resolution" value="2.32 A"/>
    <property type="chains" value="K/L/M/N=384-412"/>
</dbReference>
<dbReference type="PDBsum" id="4LOO"/>
<dbReference type="PDBsum" id="4LOP"/>
<dbReference type="PDBsum" id="4LOQ"/>
<dbReference type="SMR" id="Q8CF89"/>
<dbReference type="BioGRID" id="211528">
    <property type="interactions" value="13"/>
</dbReference>
<dbReference type="ELM" id="Q8CF89"/>
<dbReference type="FunCoup" id="Q8CF89">
    <property type="interactions" value="3023"/>
</dbReference>
<dbReference type="IntAct" id="Q8CF89">
    <property type="interactions" value="12"/>
</dbReference>
<dbReference type="MINT" id="Q8CF89"/>
<dbReference type="STRING" id="10090.ENSMUSP00000023050"/>
<dbReference type="GlyGen" id="Q8CF89">
    <property type="glycosylation" value="5 sites, 1 O-linked glycan (3 sites)"/>
</dbReference>
<dbReference type="iPTMnet" id="Q8CF89"/>
<dbReference type="PhosphoSitePlus" id="Q8CF89"/>
<dbReference type="PaxDb" id="10090-ENSMUSP00000023050"/>
<dbReference type="PeptideAtlas" id="Q8CF89"/>
<dbReference type="ProteomicsDB" id="253463"/>
<dbReference type="Pumba" id="Q8CF89"/>
<dbReference type="Antibodypedia" id="12659">
    <property type="antibodies" value="630 antibodies from 44 providers"/>
</dbReference>
<dbReference type="DNASU" id="66513"/>
<dbReference type="Ensembl" id="ENSMUST00000023050.9">
    <property type="protein sequence ID" value="ENSMUSP00000023050.8"/>
    <property type="gene ID" value="ENSMUSG00000022414.9"/>
</dbReference>
<dbReference type="GeneID" id="66513"/>
<dbReference type="KEGG" id="mmu:66513"/>
<dbReference type="UCSC" id="uc007wve.1">
    <property type="organism name" value="mouse"/>
</dbReference>
<dbReference type="AGR" id="MGI:1913763"/>
<dbReference type="CTD" id="10454"/>
<dbReference type="MGI" id="MGI:1913763">
    <property type="gene designation" value="Tab1"/>
</dbReference>
<dbReference type="VEuPathDB" id="HostDB:ENSMUSG00000022414"/>
<dbReference type="eggNOG" id="KOG0698">
    <property type="taxonomic scope" value="Eukaryota"/>
</dbReference>
<dbReference type="GeneTree" id="ENSGT00510000048276"/>
<dbReference type="HOGENOM" id="CLU_027717_1_0_1"/>
<dbReference type="InParanoid" id="Q8CF89"/>
<dbReference type="OMA" id="HPFEDRS"/>
<dbReference type="OrthoDB" id="10049211at2759"/>
<dbReference type="PhylomeDB" id="Q8CF89"/>
<dbReference type="TreeFam" id="TF317785"/>
<dbReference type="Reactome" id="R-MMU-168638">
    <property type="pathway name" value="NOD1/2 Signaling Pathway"/>
</dbReference>
<dbReference type="Reactome" id="R-MMU-2871837">
    <property type="pathway name" value="FCERI mediated NF-kB activation"/>
</dbReference>
<dbReference type="Reactome" id="R-MMU-445989">
    <property type="pathway name" value="TAK1-dependent IKK and NF-kappa-B activation"/>
</dbReference>
<dbReference type="Reactome" id="R-MMU-450302">
    <property type="pathway name" value="activated TAK1 mediates p38 MAPK activation"/>
</dbReference>
<dbReference type="Reactome" id="R-MMU-450321">
    <property type="pathway name" value="JNK (c-Jun kinases) phosphorylation and activation mediated by activated human TAK1"/>
</dbReference>
<dbReference type="Reactome" id="R-MMU-5357956">
    <property type="pathway name" value="TNFR1-induced NF-kappa-B signaling pathway"/>
</dbReference>
<dbReference type="Reactome" id="R-MMU-5607764">
    <property type="pathway name" value="CLEC7A (Dectin-1) signaling"/>
</dbReference>
<dbReference type="Reactome" id="R-MMU-5689880">
    <property type="pathway name" value="Ub-specific processing proteases"/>
</dbReference>
<dbReference type="Reactome" id="R-MMU-9020702">
    <property type="pathway name" value="Interleukin-1 signaling"/>
</dbReference>
<dbReference type="Reactome" id="R-MMU-937042">
    <property type="pathway name" value="IRAK2 mediated activation of TAK1 complex"/>
</dbReference>
<dbReference type="Reactome" id="R-MMU-937072">
    <property type="pathway name" value="TRAF6-mediated induction of TAK1 complex within TLR4 complex"/>
</dbReference>
<dbReference type="Reactome" id="R-MMU-9645460">
    <property type="pathway name" value="Alpha-protein kinase 1 signaling pathway"/>
</dbReference>
<dbReference type="Reactome" id="R-MMU-975163">
    <property type="pathway name" value="IRAK2 mediated activation of TAK1 complex upon TLR7/8 or 9 stimulation"/>
</dbReference>
<dbReference type="BioGRID-ORCS" id="66513">
    <property type="hits" value="15 hits in 79 CRISPR screens"/>
</dbReference>
<dbReference type="ChiTaRS" id="Tab1">
    <property type="organism name" value="mouse"/>
</dbReference>
<dbReference type="PRO" id="PR:Q8CF89"/>
<dbReference type="Proteomes" id="UP000000589">
    <property type="component" value="Chromosome 15"/>
</dbReference>
<dbReference type="RNAct" id="Q8CF89">
    <property type="molecule type" value="protein"/>
</dbReference>
<dbReference type="Bgee" id="ENSMUSG00000022414">
    <property type="expression patterns" value="Expressed in dorsal pancreas and 213 other cell types or tissues"/>
</dbReference>
<dbReference type="ExpressionAtlas" id="Q8CF89">
    <property type="expression patterns" value="baseline and differential"/>
</dbReference>
<dbReference type="GO" id="GO:0005829">
    <property type="term" value="C:cytosol"/>
    <property type="evidence" value="ECO:0000304"/>
    <property type="project" value="Reactome"/>
</dbReference>
<dbReference type="GO" id="GO:0005783">
    <property type="term" value="C:endoplasmic reticulum"/>
    <property type="evidence" value="ECO:0000250"/>
    <property type="project" value="UniProtKB"/>
</dbReference>
<dbReference type="GO" id="GO:0005789">
    <property type="term" value="C:endoplasmic reticulum membrane"/>
    <property type="evidence" value="ECO:0007669"/>
    <property type="project" value="UniProtKB-SubCell"/>
</dbReference>
<dbReference type="GO" id="GO:0032991">
    <property type="term" value="C:protein-containing complex"/>
    <property type="evidence" value="ECO:0007669"/>
    <property type="project" value="Ensembl"/>
</dbReference>
<dbReference type="GO" id="GO:0019209">
    <property type="term" value="F:kinase activator activity"/>
    <property type="evidence" value="ECO:0000315"/>
    <property type="project" value="MGI"/>
</dbReference>
<dbReference type="GO" id="GO:0048273">
    <property type="term" value="F:mitogen-activated protein kinase p38 binding"/>
    <property type="evidence" value="ECO:0007669"/>
    <property type="project" value="Ensembl"/>
</dbReference>
<dbReference type="GO" id="GO:0060090">
    <property type="term" value="F:molecular adaptor activity"/>
    <property type="evidence" value="ECO:0007669"/>
    <property type="project" value="Ensembl"/>
</dbReference>
<dbReference type="GO" id="GO:0043539">
    <property type="term" value="F:protein serine/threonine kinase activator activity"/>
    <property type="evidence" value="ECO:0000250"/>
    <property type="project" value="UniProtKB"/>
</dbReference>
<dbReference type="GO" id="GO:0004722">
    <property type="term" value="F:protein serine/threonine phosphatase activity"/>
    <property type="evidence" value="ECO:0007669"/>
    <property type="project" value="InterPro"/>
</dbReference>
<dbReference type="GO" id="GO:0044877">
    <property type="term" value="F:protein-containing complex binding"/>
    <property type="evidence" value="ECO:0007669"/>
    <property type="project" value="Ensembl"/>
</dbReference>
<dbReference type="GO" id="GO:0035904">
    <property type="term" value="P:aorta development"/>
    <property type="evidence" value="ECO:0000315"/>
    <property type="project" value="MGI"/>
</dbReference>
<dbReference type="GO" id="GO:0003279">
    <property type="term" value="P:cardiac septum development"/>
    <property type="evidence" value="ECO:0000315"/>
    <property type="project" value="MGI"/>
</dbReference>
<dbReference type="GO" id="GO:0060976">
    <property type="term" value="P:coronary vasculature development"/>
    <property type="evidence" value="ECO:0000315"/>
    <property type="project" value="MGI"/>
</dbReference>
<dbReference type="GO" id="GO:0003007">
    <property type="term" value="P:heart morphogenesis"/>
    <property type="evidence" value="ECO:0000315"/>
    <property type="project" value="MGI"/>
</dbReference>
<dbReference type="GO" id="GO:0001701">
    <property type="term" value="P:in utero embryonic development"/>
    <property type="evidence" value="ECO:0000315"/>
    <property type="project" value="MGI"/>
</dbReference>
<dbReference type="GO" id="GO:0030324">
    <property type="term" value="P:lung development"/>
    <property type="evidence" value="ECO:0000315"/>
    <property type="project" value="MGI"/>
</dbReference>
<dbReference type="GO" id="GO:0038061">
    <property type="term" value="P:non-canonical NF-kappaB signal transduction"/>
    <property type="evidence" value="ECO:0007669"/>
    <property type="project" value="Ensembl"/>
</dbReference>
<dbReference type="GO" id="GO:0141111">
    <property type="term" value="P:positive regulation of cGAS/STING signaling pathway"/>
    <property type="evidence" value="ECO:0007669"/>
    <property type="project" value="Ensembl"/>
</dbReference>
<dbReference type="GO" id="GO:0043410">
    <property type="term" value="P:positive regulation of MAPK cascade"/>
    <property type="evidence" value="ECO:0000315"/>
    <property type="project" value="MGI"/>
</dbReference>
<dbReference type="GO" id="GO:0007179">
    <property type="term" value="P:transforming growth factor beta receptor signaling pathway"/>
    <property type="evidence" value="ECO:0000315"/>
    <property type="project" value="MGI"/>
</dbReference>
<dbReference type="CDD" id="cd00143">
    <property type="entry name" value="PP2Cc"/>
    <property type="match status" value="1"/>
</dbReference>
<dbReference type="FunFam" id="3.60.40.10:FF:000014">
    <property type="entry name" value="TGF-beta-activated kinase 1 and MAP3K7-binding protein 1-like"/>
    <property type="match status" value="1"/>
</dbReference>
<dbReference type="Gene3D" id="3.60.40.10">
    <property type="entry name" value="PPM-type phosphatase domain"/>
    <property type="match status" value="1"/>
</dbReference>
<dbReference type="IDEAL" id="IID50233"/>
<dbReference type="InterPro" id="IPR015655">
    <property type="entry name" value="PP2C"/>
</dbReference>
<dbReference type="InterPro" id="IPR036457">
    <property type="entry name" value="PPM-type-like_dom_sf"/>
</dbReference>
<dbReference type="InterPro" id="IPR001932">
    <property type="entry name" value="PPM-type_phosphatase-like_dom"/>
</dbReference>
<dbReference type="PANTHER" id="PTHR13832">
    <property type="entry name" value="PROTEIN PHOSPHATASE 2C"/>
    <property type="match status" value="1"/>
</dbReference>
<dbReference type="PANTHER" id="PTHR13832:SF533">
    <property type="entry name" value="TGF-BETA-ACTIVATED KINASE 1 AND MAP3K7-BINDING PROTEIN 1"/>
    <property type="match status" value="1"/>
</dbReference>
<dbReference type="Pfam" id="PF00481">
    <property type="entry name" value="PP2C"/>
    <property type="match status" value="1"/>
</dbReference>
<dbReference type="SMART" id="SM00332">
    <property type="entry name" value="PP2Cc"/>
    <property type="match status" value="1"/>
</dbReference>
<dbReference type="SUPFAM" id="SSF81606">
    <property type="entry name" value="PP2C-like"/>
    <property type="match status" value="1"/>
</dbReference>
<dbReference type="PROSITE" id="PS51746">
    <property type="entry name" value="PPM_2"/>
    <property type="match status" value="1"/>
</dbReference>
<keyword id="KW-0002">3D-structure</keyword>
<keyword id="KW-0963">Cytoplasm</keyword>
<keyword id="KW-0256">Endoplasmic reticulum</keyword>
<keyword id="KW-0325">Glycoprotein</keyword>
<keyword id="KW-0472">Membrane</keyword>
<keyword id="KW-0597">Phosphoprotein</keyword>
<keyword id="KW-1185">Reference proteome</keyword>
<keyword id="KW-0832">Ubl conjugation</keyword>
<organism>
    <name type="scientific">Mus musculus</name>
    <name type="common">Mouse</name>
    <dbReference type="NCBI Taxonomy" id="10090"/>
    <lineage>
        <taxon>Eukaryota</taxon>
        <taxon>Metazoa</taxon>
        <taxon>Chordata</taxon>
        <taxon>Craniata</taxon>
        <taxon>Vertebrata</taxon>
        <taxon>Euteleostomi</taxon>
        <taxon>Mammalia</taxon>
        <taxon>Eutheria</taxon>
        <taxon>Euarchontoglires</taxon>
        <taxon>Glires</taxon>
        <taxon>Rodentia</taxon>
        <taxon>Myomorpha</taxon>
        <taxon>Muroidea</taxon>
        <taxon>Muridae</taxon>
        <taxon>Murinae</taxon>
        <taxon>Mus</taxon>
        <taxon>Mus</taxon>
    </lineage>
</organism>
<evidence type="ECO:0000250" key="1">
    <source>
        <dbReference type="UniProtKB" id="Q15750"/>
    </source>
</evidence>
<evidence type="ECO:0000255" key="2">
    <source>
        <dbReference type="PROSITE-ProRule" id="PRU01082"/>
    </source>
</evidence>
<evidence type="ECO:0000256" key="3">
    <source>
        <dbReference type="SAM" id="MobiDB-lite"/>
    </source>
</evidence>
<evidence type="ECO:0000269" key="4">
    <source>
    </source>
</evidence>
<evidence type="ECO:0000269" key="5">
    <source>
    </source>
</evidence>
<evidence type="ECO:0000269" key="6">
    <source>
    </source>
</evidence>
<evidence type="ECO:0000269" key="7">
    <source>
    </source>
</evidence>
<evidence type="ECO:0000305" key="8"/>
<evidence type="ECO:0007744" key="9">
    <source>
        <dbReference type="PDB" id="4LOO"/>
    </source>
</evidence>
<evidence type="ECO:0007744" key="10">
    <source>
        <dbReference type="PDB" id="4LOP"/>
    </source>
</evidence>
<evidence type="ECO:0007744" key="11">
    <source>
        <dbReference type="PDB" id="4LOQ"/>
    </source>
</evidence>
<evidence type="ECO:0007744" key="12">
    <source>
    </source>
</evidence>
<reference key="1">
    <citation type="journal article" date="2002" name="Mech. Dev.">
        <title>Targeted disruption of the Tab1 gene causes embryonic lethality and defects in cardiovascular and lung morphogenesis.</title>
        <authorList>
            <person name="Komatsu Y."/>
            <person name="Shibuya H."/>
            <person name="Takeda N."/>
            <person name="Ninomiya-Tsuji J."/>
            <person name="Yasui T."/>
            <person name="Miyado K."/>
            <person name="Sekimoto T."/>
            <person name="Ueno N."/>
            <person name="Matsumoto K."/>
            <person name="Yamada G."/>
        </authorList>
    </citation>
    <scope>NUCLEOTIDE SEQUENCE [MRNA]</scope>
    <scope>FUNCTION</scope>
    <scope>DISRUPTION PHENOTYPE</scope>
</reference>
<reference key="2">
    <citation type="journal article" date="2004" name="Genome Res.">
        <title>The status, quality, and expansion of the NIH full-length cDNA project: the Mammalian Gene Collection (MGC).</title>
        <authorList>
            <consortium name="The MGC Project Team"/>
        </authorList>
    </citation>
    <scope>NUCLEOTIDE SEQUENCE [LARGE SCALE MRNA]</scope>
    <source>
        <strain>FVB/N</strain>
        <tissue>Eye</tissue>
        <tissue>Kidney</tissue>
        <tissue>Mammary tumor</tissue>
    </source>
</reference>
<reference key="3">
    <citation type="journal article" date="2010" name="Cell">
        <title>A tissue-specific atlas of mouse protein phosphorylation and expression.</title>
        <authorList>
            <person name="Huttlin E.L."/>
            <person name="Jedrychowski M.P."/>
            <person name="Elias J.E."/>
            <person name="Goswami T."/>
            <person name="Rad R."/>
            <person name="Beausoleil S.A."/>
            <person name="Villen J."/>
            <person name="Haas W."/>
            <person name="Sowa M.E."/>
            <person name="Gygi S.P."/>
        </authorList>
    </citation>
    <scope>PHOSPHORYLATION [LARGE SCALE ANALYSIS] AT SER-7</scope>
    <scope>IDENTIFICATION BY MASS SPECTROMETRY [LARGE SCALE ANALYSIS]</scope>
    <source>
        <tissue>Brown adipose tissue</tissue>
        <tissue>Kidney</tissue>
        <tissue>Lung</tissue>
        <tissue>Pancreas</tissue>
        <tissue>Spleen</tissue>
    </source>
</reference>
<reference key="4">
    <citation type="journal article" date="2017" name="EMBO Rep.">
        <title>The E3 ubiquitin ligase RNF114 and TAB1 degradation are required for maternal-to-zygotic transition.</title>
        <authorList>
            <person name="Yang Y."/>
            <person name="Zhou C."/>
            <person name="Wang Y."/>
            <person name="Liu W."/>
            <person name="Liu C."/>
            <person name="Wang L."/>
            <person name="Liu Y."/>
            <person name="Shang Y."/>
            <person name="Li M."/>
            <person name="Zhou S."/>
            <person name="Wang Y."/>
            <person name="Zeng W."/>
            <person name="Zhou J."/>
            <person name="Huo R."/>
            <person name="Li W."/>
        </authorList>
    </citation>
    <scope>FUNCTION</scope>
    <scope>UBIQUITNATION BY RNF114</scope>
</reference>
<reference key="5">
    <citation type="journal article" date="2023" name="Mol. Cell">
        <title>TAK1 is an essential kinase for STING trafficking.</title>
        <authorList>
            <person name="Ma M."/>
            <person name="Dang Y."/>
            <person name="Chang B."/>
            <person name="Wang F."/>
            <person name="Xu J."/>
            <person name="Chen L."/>
            <person name="Su H."/>
            <person name="Li J."/>
            <person name="Ge B."/>
            <person name="Chen C."/>
            <person name="Liu H."/>
        </authorList>
    </citation>
    <scope>FUNCTION</scope>
    <scope>INTERACTION WITH STING1</scope>
    <scope>SUBCELLULAR LOCATION</scope>
</reference>
<reference evidence="9 10 11" key="6">
    <citation type="journal article" date="2013" name="Nat. Struct. Mol. Biol.">
        <title>Mechanism and consequence of the autoactivation of p38alpha mitogen-activated protein kinase promoted by TAB1.</title>
        <authorList>
            <person name="DeNicola G.F."/>
            <person name="Martin E.D."/>
            <person name="Chaikuad A."/>
            <person name="Bassi R."/>
            <person name="Clark J."/>
            <person name="Martino L."/>
            <person name="Verma S."/>
            <person name="Sicard P."/>
            <person name="Tata R."/>
            <person name="Atkinson R.A."/>
            <person name="Knapp S."/>
            <person name="Conte M.R."/>
            <person name="Marber M.S."/>
        </authorList>
    </citation>
    <scope>X-RAY CRYSTALLOGRAPHY (1.95 ANGSTROMS) OF 384-412</scope>
    <scope>FUNCTION</scope>
</reference>
<accession>Q8CF89</accession>
<accession>Q7TQJ5</accession>
<accession>Q80V65</accession>
<accession>Q8R0D1</accession>
<protein>
    <recommendedName>
        <fullName>TGF-beta-activated kinase 1 and MAP3K7-binding protein 1</fullName>
    </recommendedName>
    <alternativeName>
        <fullName>Mitogen-activated protein kinase kinase kinase 7-interacting protein 1</fullName>
    </alternativeName>
    <alternativeName>
        <fullName>TGF-beta-activated kinase 1-binding protein 1</fullName>
        <shortName>TAK1-binding protein 1</shortName>
    </alternativeName>
</protein>
<proteinExistence type="evidence at protein level"/>